<gene>
    <name type="primary">Segment-5</name>
</gene>
<organismHost>
    <name type="scientific">Antilocapra americana</name>
    <name type="common">Pronghorn</name>
    <dbReference type="NCBI Taxonomy" id="9891"/>
</organismHost>
<organismHost>
    <name type="scientific">Bos taurus</name>
    <name type="common">Bovine</name>
    <dbReference type="NCBI Taxonomy" id="9913"/>
</organismHost>
<organismHost>
    <name type="scientific">Capra hircus</name>
    <name type="common">Goat</name>
    <dbReference type="NCBI Taxonomy" id="9925"/>
</organismHost>
<organismHost>
    <name type="scientific">Culicoides variipennis</name>
    <name type="common">Biting midge</name>
    <dbReference type="NCBI Taxonomy" id="46212"/>
</organismHost>
<organismHost>
    <name type="scientific">Ovis aries</name>
    <name type="common">Sheep</name>
    <dbReference type="NCBI Taxonomy" id="9940"/>
</organismHost>
<dbReference type="EMBL" id="X15891">
    <property type="protein sequence ID" value="CAA33900.1"/>
    <property type="molecule type" value="Genomic_RNA"/>
</dbReference>
<dbReference type="EMBL" id="X17041">
    <property type="protein sequence ID" value="CAA34899.1"/>
    <property type="molecule type" value="Genomic_RNA"/>
</dbReference>
<dbReference type="PIR" id="S06895">
    <property type="entry name" value="S06895"/>
</dbReference>
<dbReference type="SMR" id="P14245"/>
<dbReference type="InterPro" id="IPR002630">
    <property type="entry name" value="Orbi_NS1"/>
</dbReference>
<dbReference type="Pfam" id="PF01718">
    <property type="entry name" value="Orbi_NS1"/>
    <property type="match status" value="1"/>
</dbReference>
<evidence type="ECO:0000305" key="1"/>
<feature type="chain" id="PRO_0000222668" description="Non-structural protein NS1">
    <location>
        <begin position="1"/>
        <end position="552"/>
    </location>
</feature>
<feature type="sequence conflict" description="In Ref. 2; CAA34899." evidence="1" ref="2">
    <original>N</original>
    <variation>D</variation>
    <location>
        <position position="119"/>
    </location>
</feature>
<protein>
    <recommendedName>
        <fullName>Non-structural protein NS1</fullName>
    </recommendedName>
</protein>
<accession>P14245</accession>
<organism>
    <name type="scientific">Bluetongue virus 17 (isolate USA)</name>
    <name type="common">BTV 17</name>
    <dbReference type="NCBI Taxonomy" id="33718"/>
    <lineage>
        <taxon>Viruses</taxon>
        <taxon>Riboviria</taxon>
        <taxon>Orthornavirae</taxon>
        <taxon>Duplornaviricota</taxon>
        <taxon>Resentoviricetes</taxon>
        <taxon>Reovirales</taxon>
        <taxon>Sedoreoviridae</taxon>
        <taxon>Orbivirus</taxon>
        <taxon>Bluetongue virus</taxon>
    </lineage>
</organism>
<reference key="1">
    <citation type="journal article" date="1989" name="Nucleic Acids Res.">
        <title>Complete sequence of the NS1 gene (S6 RNA) of US bluetongue virus serotype 17.</title>
        <authorList>
            <person name="Wang L.F."/>
            <person name="Doi R.H."/>
            <person name="Osburn B.I."/>
            <person name="Chuang R.Y."/>
        </authorList>
    </citation>
    <scope>NUCLEOTIDE SEQUENCE [GENOMIC RNA]</scope>
</reference>
<reference key="2">
    <citation type="journal article" date="1989" name="Nucleic Acids Res.">
        <title>Nucleotide and deduced amino acid sequence of the nonstructural protein, NS1, of the US bluetongue virus serotype 17.</title>
        <authorList>
            <person name="Grubman M.J."/>
            <person name="Samal S."/>
        </authorList>
    </citation>
    <scope>NUCLEOTIDE SEQUENCE [GENOMIC RNA]</scope>
</reference>
<proteinExistence type="inferred from homology"/>
<sequence length="552" mass="64545">MERFLRKYNISGDYANATRTFLAISPQWTCSHLKRNCLFNGMCVKQHFERAMIAATDAEEPAKAYKLVELAKEAMYDRETVWLQCFKSFSQPYEEDVEGKMKRCGAQLLEDYRKSGMMNEAVKQSALVNSERIRLDDSLSAMPYIYVPINDGQIVNPTFISRYRQIAYYFYNPDAADDWIDPNLFGIRGQHNQIKREVERQINTCPYTGYRGRVFQVMFLPIQLINFLRMDDFAKHFNRYASMAIQQYLRVGYAEEIRYVQQLFGRVPTGEFPLHQMMLMRRDLPTRDRSIVEARVRRSGDENWQSWLLPMIIIREGLDHQDRWEWFIDYMDRKHTCQLCYLKHSKQIPACSVIDVRASELTGCSPFKMVKIEEHVGNDSVFKTKLVRDEQIGRIGDHYYTTNCYTGAEALITTAIHIHRWIRGSGIWNDEGWQEGIFMLGRVLLRWELTKAQRSALLRLFCFVCYGYAPRADGTIPDWNNLGNFLDIILKGPELSEDEDERAYATMFEMVRCIITLCYAEKVHFAGFAAPACEGGEVINLAARMSQMWMEY</sequence>
<comment type="similarity">
    <text evidence="1">Belongs to the orbivirus non-structural protein NS1 family.</text>
</comment>
<name>VNS1_BTV17</name>